<dbReference type="EC" id="3.6.4.-" evidence="3"/>
<dbReference type="EMBL" id="AY550069">
    <property type="protein sequence ID" value="AAS55927.1"/>
    <property type="status" value="ALT_INIT"/>
    <property type="molecule type" value="mRNA"/>
</dbReference>
<dbReference type="RefSeq" id="XP_003124328.1">
    <property type="nucleotide sequence ID" value="XM_003124280.5"/>
</dbReference>
<dbReference type="RefSeq" id="XP_020941706.1">
    <property type="nucleotide sequence ID" value="XM_021086047.1"/>
</dbReference>
<dbReference type="PDB" id="5ADX">
    <property type="method" value="EM"/>
    <property type="resolution" value="4.00 A"/>
    <property type="chains" value="H=6-375"/>
</dbReference>
<dbReference type="PDB" id="5AFU">
    <property type="method" value="EM"/>
    <property type="resolution" value="3.50 A"/>
    <property type="chains" value="H=6-375"/>
</dbReference>
<dbReference type="PDB" id="6F1T">
    <property type="method" value="EM"/>
    <property type="resolution" value="3.50 A"/>
    <property type="chains" value="H=1-375"/>
</dbReference>
<dbReference type="PDB" id="6F38">
    <property type="method" value="EM"/>
    <property type="resolution" value="6.70 A"/>
    <property type="chains" value="H=1-375"/>
</dbReference>
<dbReference type="PDB" id="6F3A">
    <property type="method" value="EM"/>
    <property type="resolution" value="8.20 A"/>
    <property type="chains" value="H=1-375"/>
</dbReference>
<dbReference type="PDB" id="6ZNL">
    <property type="method" value="EM"/>
    <property type="resolution" value="3.80 A"/>
    <property type="chains" value="H=1-375"/>
</dbReference>
<dbReference type="PDB" id="6ZNM">
    <property type="method" value="EM"/>
    <property type="resolution" value="4.10 A"/>
    <property type="chains" value="H=1-375"/>
</dbReference>
<dbReference type="PDB" id="6ZNN">
    <property type="method" value="EM"/>
    <property type="resolution" value="4.50 A"/>
    <property type="chains" value="H=1-375"/>
</dbReference>
<dbReference type="PDB" id="6ZNO">
    <property type="method" value="EM"/>
    <property type="resolution" value="6.80 A"/>
    <property type="chains" value="H=1-375"/>
</dbReference>
<dbReference type="PDB" id="6ZO4">
    <property type="method" value="EM"/>
    <property type="resolution" value="8.20 A"/>
    <property type="chains" value="H=1-375"/>
</dbReference>
<dbReference type="PDB" id="7Z8F">
    <property type="method" value="EM"/>
    <property type="resolution" value="20.00 A"/>
    <property type="chains" value="H=1-375"/>
</dbReference>
<dbReference type="PDB" id="7Z8M">
    <property type="method" value="EM"/>
    <property type="resolution" value="3.37 A"/>
    <property type="chains" value="H=1-375"/>
</dbReference>
<dbReference type="PDB" id="8IAH">
    <property type="method" value="EM"/>
    <property type="resolution" value="3.60 A"/>
    <property type="chains" value="A/B/C/D/E/F/G/H/I/J/K/L=1-375"/>
</dbReference>
<dbReference type="PDB" id="8IAI">
    <property type="method" value="EM"/>
    <property type="resolution" value="3.50 A"/>
    <property type="chains" value="A/B/C/D/E/F/G/H/I/J/K=1-375"/>
</dbReference>
<dbReference type="PDB" id="8IB2">
    <property type="method" value="EM"/>
    <property type="resolution" value="3.80 A"/>
    <property type="chains" value="B/C/D/E/F=1-375"/>
</dbReference>
<dbReference type="PDB" id="8P94">
    <property type="method" value="EM"/>
    <property type="resolution" value="3.30 A"/>
    <property type="chains" value="H/J/K/N/O/P/Q/R/S/W=1-375"/>
</dbReference>
<dbReference type="PDB" id="8PTK">
    <property type="method" value="EM"/>
    <property type="resolution" value="10.00 A"/>
    <property type="chains" value="H=1-375"/>
</dbReference>
<dbReference type="PDBsum" id="5ADX"/>
<dbReference type="PDBsum" id="5AFU"/>
<dbReference type="PDBsum" id="6F1T"/>
<dbReference type="PDBsum" id="6F38"/>
<dbReference type="PDBsum" id="6F3A"/>
<dbReference type="PDBsum" id="6ZNL"/>
<dbReference type="PDBsum" id="6ZNM"/>
<dbReference type="PDBsum" id="6ZNN"/>
<dbReference type="PDBsum" id="6ZNO"/>
<dbReference type="PDBsum" id="6ZO4"/>
<dbReference type="PDBsum" id="7Z8F"/>
<dbReference type="PDBsum" id="7Z8M"/>
<dbReference type="PDBsum" id="8IAH"/>
<dbReference type="PDBsum" id="8IAI"/>
<dbReference type="PDBsum" id="8IB2"/>
<dbReference type="PDBsum" id="8P94"/>
<dbReference type="PDBsum" id="8PTK"/>
<dbReference type="EMDB" id="EMD-11313"/>
<dbReference type="EMDB" id="EMD-11317"/>
<dbReference type="EMDB" id="EMD-11318"/>
<dbReference type="EMDB" id="EMD-11319"/>
<dbReference type="EMDB" id="EMD-14549"/>
<dbReference type="EMDB" id="EMD-14559"/>
<dbReference type="EMDB" id="EMD-17558"/>
<dbReference type="EMDB" id="EMD-17873"/>
<dbReference type="EMDB" id="EMD-2856"/>
<dbReference type="EMDB" id="EMD-2857"/>
<dbReference type="EMDB" id="EMD-35301"/>
<dbReference type="EMDB" id="EMD-35302"/>
<dbReference type="EMDB" id="EMD-35329"/>
<dbReference type="EMDB" id="EMD-4168"/>
<dbReference type="EMDB" id="EMD-4177"/>
<dbReference type="SMR" id="Q6QAQ1"/>
<dbReference type="FunCoup" id="Q6QAQ1">
    <property type="interactions" value="1937"/>
</dbReference>
<dbReference type="IntAct" id="Q6QAQ1">
    <property type="interactions" value="2"/>
</dbReference>
<dbReference type="STRING" id="9823.ENSSSCP00000035521"/>
<dbReference type="PaxDb" id="9823-ENSSSCP00000008105"/>
<dbReference type="PeptideAtlas" id="Q6QAQ1"/>
<dbReference type="Ensembl" id="ENSSSCT00000042531.2">
    <property type="protein sequence ID" value="ENSSSCP00000035521.2"/>
    <property type="gene ID" value="ENSSSCG00000007585.5"/>
</dbReference>
<dbReference type="Ensembl" id="ENSSSCT00030004519.1">
    <property type="protein sequence ID" value="ENSSSCP00030001789.1"/>
    <property type="gene ID" value="ENSSSCG00030003451.1"/>
</dbReference>
<dbReference type="Ensembl" id="ENSSSCT00035051497.1">
    <property type="protein sequence ID" value="ENSSSCP00035020643.1"/>
    <property type="gene ID" value="ENSSSCG00035038792.1"/>
</dbReference>
<dbReference type="Ensembl" id="ENSSSCT00040066726.1">
    <property type="protein sequence ID" value="ENSSSCP00040028298.1"/>
    <property type="gene ID" value="ENSSSCG00040049462.1"/>
</dbReference>
<dbReference type="Ensembl" id="ENSSSCT00045046823.1">
    <property type="protein sequence ID" value="ENSSSCP00045032503.1"/>
    <property type="gene ID" value="ENSSSCG00045027458.1"/>
</dbReference>
<dbReference type="Ensembl" id="ENSSSCT00050088575.1">
    <property type="protein sequence ID" value="ENSSSCP00050037989.1"/>
    <property type="gene ID" value="ENSSSCG00050065025.1"/>
</dbReference>
<dbReference type="Ensembl" id="ENSSSCT00055024985.1">
    <property type="protein sequence ID" value="ENSSSCP00055019840.1"/>
    <property type="gene ID" value="ENSSSCG00055012597.1"/>
</dbReference>
<dbReference type="Ensembl" id="ENSSSCT00055025023.1">
    <property type="protein sequence ID" value="ENSSSCP00055019871.1"/>
    <property type="gene ID" value="ENSSSCG00055012597.1"/>
</dbReference>
<dbReference type="Ensembl" id="ENSSSCT00055025117.1">
    <property type="protein sequence ID" value="ENSSSCP00055019955.1"/>
    <property type="gene ID" value="ENSSSCG00055012597.1"/>
</dbReference>
<dbReference type="Ensembl" id="ENSSSCT00060025751.1">
    <property type="protein sequence ID" value="ENSSSCP00060010890.1"/>
    <property type="gene ID" value="ENSSSCG00060019124.1"/>
</dbReference>
<dbReference type="Ensembl" id="ENSSSCT00065051863.1">
    <property type="protein sequence ID" value="ENSSSCP00065022539.1"/>
    <property type="gene ID" value="ENSSSCG00065037921.1"/>
</dbReference>
<dbReference type="Ensembl" id="ENSSSCT00065051865.1">
    <property type="protein sequence ID" value="ENSSSCP00065022540.1"/>
    <property type="gene ID" value="ENSSSCG00065037921.1"/>
</dbReference>
<dbReference type="Ensembl" id="ENSSSCT00065051872.1">
    <property type="protein sequence ID" value="ENSSSCP00065022543.1"/>
    <property type="gene ID" value="ENSSSCG00065037921.1"/>
</dbReference>
<dbReference type="Ensembl" id="ENSSSCT00070022245.1">
    <property type="protein sequence ID" value="ENSSSCP00070018415.1"/>
    <property type="gene ID" value="ENSSSCG00070011353.1"/>
</dbReference>
<dbReference type="Ensembl" id="ENSSSCT00070022248.1">
    <property type="protein sequence ID" value="ENSSSCP00070018418.1"/>
    <property type="gene ID" value="ENSSSCG00070011353.1"/>
</dbReference>
<dbReference type="Ensembl" id="ENSSSCT00105057283">
    <property type="protein sequence ID" value="ENSSSCP00105040363"/>
    <property type="gene ID" value="ENSSSCG00105030144"/>
</dbReference>
<dbReference type="Ensembl" id="ENSSSCT00110051790">
    <property type="protein sequence ID" value="ENSSSCP00110036229"/>
    <property type="gene ID" value="ENSSSCG00110026965"/>
</dbReference>
<dbReference type="Ensembl" id="ENSSSCT00115023682">
    <property type="protein sequence ID" value="ENSSSCP00115022457"/>
    <property type="gene ID" value="ENSSSCG00115013637"/>
</dbReference>
<dbReference type="Ensembl" id="ENSSSCT00130066062">
    <property type="protein sequence ID" value="ENSSSCP00130047362"/>
    <property type="gene ID" value="ENSSSCG00130033784"/>
</dbReference>
<dbReference type="GeneID" id="414396"/>
<dbReference type="KEGG" id="ssc:414396"/>
<dbReference type="CTD" id="60"/>
<dbReference type="VGNC" id="VGNC:96915">
    <property type="gene designation" value="ACTB"/>
</dbReference>
<dbReference type="eggNOG" id="KOG0676">
    <property type="taxonomic scope" value="Eukaryota"/>
</dbReference>
<dbReference type="GeneTree" id="ENSGT00950000182960"/>
<dbReference type="HOGENOM" id="CLU_027965_0_2_1"/>
<dbReference type="InParanoid" id="Q6QAQ1"/>
<dbReference type="OMA" id="FHTTAER"/>
<dbReference type="OrthoDB" id="9816604at2759"/>
<dbReference type="TreeFam" id="TF354237"/>
<dbReference type="Reactome" id="R-SSC-190873">
    <property type="pathway name" value="Gap junction degradation"/>
</dbReference>
<dbReference type="Reactome" id="R-SSC-196025">
    <property type="pathway name" value="Formation of annular gap junctions"/>
</dbReference>
<dbReference type="Reactome" id="R-SSC-2029482">
    <property type="pathway name" value="Regulation of actin dynamics for phagocytic cup formation"/>
</dbReference>
<dbReference type="Reactome" id="R-SSC-3928662">
    <property type="pathway name" value="EPHB-mediated forward signaling"/>
</dbReference>
<dbReference type="Reactome" id="R-SSC-418990">
    <property type="pathway name" value="Adherens junctions interactions"/>
</dbReference>
<dbReference type="Reactome" id="R-SSC-4420097">
    <property type="pathway name" value="VEGFA-VEGFR2 Pathway"/>
</dbReference>
<dbReference type="Reactome" id="R-SSC-446353">
    <property type="pathway name" value="Cell-extracellular matrix interactions"/>
</dbReference>
<dbReference type="Reactome" id="R-SSC-5626467">
    <property type="pathway name" value="RHO GTPases activate IQGAPs"/>
</dbReference>
<dbReference type="Reactome" id="R-SSC-5663213">
    <property type="pathway name" value="RHO GTPases Activate WASPs and WAVEs"/>
</dbReference>
<dbReference type="Reactome" id="R-SSC-5663220">
    <property type="pathway name" value="RHO GTPases Activate Formins"/>
</dbReference>
<dbReference type="Reactome" id="R-SSC-5674135">
    <property type="pathway name" value="MAP2K and MAPK activation"/>
</dbReference>
<dbReference type="Reactome" id="R-SSC-5689603">
    <property type="pathway name" value="UCH proteinases"/>
</dbReference>
<dbReference type="Reactome" id="R-SSC-8856828">
    <property type="pathway name" value="Clathrin-mediated endocytosis"/>
</dbReference>
<dbReference type="Reactome" id="R-SSC-9035034">
    <property type="pathway name" value="RHOF GTPase cycle"/>
</dbReference>
<dbReference type="Reactome" id="R-SSC-9913351">
    <property type="pathway name" value="Formation of the dystrophin-glycoprotein complex (DGC)"/>
</dbReference>
<dbReference type="EvolutionaryTrace" id="Q6QAQ1"/>
<dbReference type="Proteomes" id="UP000008227">
    <property type="component" value="Chromosome 3"/>
</dbReference>
<dbReference type="Proteomes" id="UP000314985">
    <property type="component" value="Chromosome 3"/>
</dbReference>
<dbReference type="Proteomes" id="UP000694570">
    <property type="component" value="Unplaced"/>
</dbReference>
<dbReference type="Proteomes" id="UP000694571">
    <property type="component" value="Unplaced"/>
</dbReference>
<dbReference type="Proteomes" id="UP000694720">
    <property type="component" value="Unplaced"/>
</dbReference>
<dbReference type="Proteomes" id="UP000694722">
    <property type="component" value="Unplaced"/>
</dbReference>
<dbReference type="Proteomes" id="UP000694723">
    <property type="component" value="Unplaced"/>
</dbReference>
<dbReference type="Proteomes" id="UP000694724">
    <property type="component" value="Unplaced"/>
</dbReference>
<dbReference type="Proteomes" id="UP000694725">
    <property type="component" value="Unplaced"/>
</dbReference>
<dbReference type="Proteomes" id="UP000694726">
    <property type="component" value="Unplaced"/>
</dbReference>
<dbReference type="Proteomes" id="UP000694727">
    <property type="component" value="Unplaced"/>
</dbReference>
<dbReference type="Proteomes" id="UP000694728">
    <property type="component" value="Unplaced"/>
</dbReference>
<dbReference type="Bgee" id="ENSSSCG00000007585">
    <property type="expression patterns" value="Expressed in lung and 42 other cell types or tissues"/>
</dbReference>
<dbReference type="ExpressionAtlas" id="Q6QAQ1">
    <property type="expression patterns" value="baseline and differential"/>
</dbReference>
<dbReference type="GO" id="GO:0015629">
    <property type="term" value="C:actin cytoskeleton"/>
    <property type="evidence" value="ECO:0000250"/>
    <property type="project" value="UniProtKB"/>
</dbReference>
<dbReference type="GO" id="GO:0005884">
    <property type="term" value="C:actin filament"/>
    <property type="evidence" value="ECO:0000318"/>
    <property type="project" value="GO_Central"/>
</dbReference>
<dbReference type="GO" id="GO:0005912">
    <property type="term" value="C:adherens junction"/>
    <property type="evidence" value="ECO:0007669"/>
    <property type="project" value="Ensembl"/>
</dbReference>
<dbReference type="GO" id="GO:0043296">
    <property type="term" value="C:apical junction complex"/>
    <property type="evidence" value="ECO:0007669"/>
    <property type="project" value="Ensembl"/>
</dbReference>
<dbReference type="GO" id="GO:0030424">
    <property type="term" value="C:axon"/>
    <property type="evidence" value="ECO:0000318"/>
    <property type="project" value="GO_Central"/>
</dbReference>
<dbReference type="GO" id="GO:0005903">
    <property type="term" value="C:brush border"/>
    <property type="evidence" value="ECO:0007669"/>
    <property type="project" value="Ensembl"/>
</dbReference>
<dbReference type="GO" id="GO:0044305">
    <property type="term" value="C:calyx of Held"/>
    <property type="evidence" value="ECO:0007669"/>
    <property type="project" value="Ensembl"/>
</dbReference>
<dbReference type="GO" id="GO:0030863">
    <property type="term" value="C:cortical cytoskeleton"/>
    <property type="evidence" value="ECO:0007669"/>
    <property type="project" value="Ensembl"/>
</dbReference>
<dbReference type="GO" id="GO:0005737">
    <property type="term" value="C:cytoplasm"/>
    <property type="evidence" value="ECO:0000318"/>
    <property type="project" value="GO_Central"/>
</dbReference>
<dbReference type="GO" id="GO:0036464">
    <property type="term" value="C:cytoplasmic ribonucleoprotein granule"/>
    <property type="evidence" value="ECO:0007669"/>
    <property type="project" value="Ensembl"/>
</dbReference>
<dbReference type="GO" id="GO:0005856">
    <property type="term" value="C:cytoskeleton"/>
    <property type="evidence" value="ECO:0000250"/>
    <property type="project" value="AgBase"/>
</dbReference>
<dbReference type="GO" id="GO:0005829">
    <property type="term" value="C:cytosol"/>
    <property type="evidence" value="ECO:0007669"/>
    <property type="project" value="Ensembl"/>
</dbReference>
<dbReference type="GO" id="GO:0097433">
    <property type="term" value="C:dense body"/>
    <property type="evidence" value="ECO:0000250"/>
    <property type="project" value="AgBase"/>
</dbReference>
<dbReference type="GO" id="GO:0005925">
    <property type="term" value="C:focal adhesion"/>
    <property type="evidence" value="ECO:0000250"/>
    <property type="project" value="AgBase"/>
</dbReference>
<dbReference type="GO" id="GO:0098978">
    <property type="term" value="C:glutamatergic synapse"/>
    <property type="evidence" value="ECO:0007669"/>
    <property type="project" value="Ensembl"/>
</dbReference>
<dbReference type="GO" id="GO:0030027">
    <property type="term" value="C:lamellipodium"/>
    <property type="evidence" value="ECO:0007669"/>
    <property type="project" value="Ensembl"/>
</dbReference>
<dbReference type="GO" id="GO:0016020">
    <property type="term" value="C:membrane"/>
    <property type="evidence" value="ECO:0000318"/>
    <property type="project" value="GO_Central"/>
</dbReference>
<dbReference type="GO" id="GO:0035267">
    <property type="term" value="C:NuA4 histone acetyltransferase complex"/>
    <property type="evidence" value="ECO:0000318"/>
    <property type="project" value="GO_Central"/>
</dbReference>
<dbReference type="GO" id="GO:0000786">
    <property type="term" value="C:nucleosome"/>
    <property type="evidence" value="ECO:0007669"/>
    <property type="project" value="Ensembl"/>
</dbReference>
<dbReference type="GO" id="GO:0005634">
    <property type="term" value="C:nucleus"/>
    <property type="evidence" value="ECO:0000250"/>
    <property type="project" value="UniProtKB"/>
</dbReference>
<dbReference type="GO" id="GO:0005886">
    <property type="term" value="C:plasma membrane"/>
    <property type="evidence" value="ECO:0000250"/>
    <property type="project" value="AgBase"/>
</dbReference>
<dbReference type="GO" id="GO:0098871">
    <property type="term" value="C:postsynaptic actin cytoskeleton"/>
    <property type="evidence" value="ECO:0007669"/>
    <property type="project" value="Ensembl"/>
</dbReference>
<dbReference type="GO" id="GO:0032991">
    <property type="term" value="C:protein-containing complex"/>
    <property type="evidence" value="ECO:0000250"/>
    <property type="project" value="UniProtKB"/>
</dbReference>
<dbReference type="GO" id="GO:1990904">
    <property type="term" value="C:ribonucleoprotein complex"/>
    <property type="evidence" value="ECO:0007669"/>
    <property type="project" value="Ensembl"/>
</dbReference>
<dbReference type="GO" id="GO:0098685">
    <property type="term" value="C:Schaffer collateral - CA1 synapse"/>
    <property type="evidence" value="ECO:0007669"/>
    <property type="project" value="Ensembl"/>
</dbReference>
<dbReference type="GO" id="GO:0045202">
    <property type="term" value="C:synapse"/>
    <property type="evidence" value="ECO:0000318"/>
    <property type="project" value="GO_Central"/>
</dbReference>
<dbReference type="GO" id="GO:0070160">
    <property type="term" value="C:tight junction"/>
    <property type="evidence" value="ECO:0007669"/>
    <property type="project" value="Ensembl"/>
</dbReference>
<dbReference type="GO" id="GO:0005524">
    <property type="term" value="F:ATP binding"/>
    <property type="evidence" value="ECO:0007669"/>
    <property type="project" value="UniProtKB-KW"/>
</dbReference>
<dbReference type="GO" id="GO:0016887">
    <property type="term" value="F:ATP hydrolysis activity"/>
    <property type="evidence" value="ECO:0007669"/>
    <property type="project" value="Ensembl"/>
</dbReference>
<dbReference type="GO" id="GO:0042802">
    <property type="term" value="F:identical protein binding"/>
    <property type="evidence" value="ECO:0007669"/>
    <property type="project" value="Ensembl"/>
</dbReference>
<dbReference type="GO" id="GO:0019894">
    <property type="term" value="F:kinesin binding"/>
    <property type="evidence" value="ECO:0007669"/>
    <property type="project" value="Ensembl"/>
</dbReference>
<dbReference type="GO" id="GO:0050998">
    <property type="term" value="F:nitric-oxide synthase binding"/>
    <property type="evidence" value="ECO:0007669"/>
    <property type="project" value="Ensembl"/>
</dbReference>
<dbReference type="GO" id="GO:0030235">
    <property type="term" value="F:nitric-oxide synthase regulator activity"/>
    <property type="evidence" value="ECO:0007669"/>
    <property type="project" value="Ensembl"/>
</dbReference>
<dbReference type="GO" id="GO:0019901">
    <property type="term" value="F:protein kinase binding"/>
    <property type="evidence" value="ECO:0000318"/>
    <property type="project" value="GO_Central"/>
</dbReference>
<dbReference type="GO" id="GO:0098973">
    <property type="term" value="F:structural constituent of postsynaptic actin cytoskeleton"/>
    <property type="evidence" value="ECO:0000318"/>
    <property type="project" value="GO_Central"/>
</dbReference>
<dbReference type="GO" id="GO:0030957">
    <property type="term" value="F:Tat protein binding"/>
    <property type="evidence" value="ECO:0007669"/>
    <property type="project" value="Ensembl"/>
</dbReference>
<dbReference type="GO" id="GO:0141108">
    <property type="term" value="F:transporter regulator activity"/>
    <property type="evidence" value="ECO:0007669"/>
    <property type="project" value="Ensembl"/>
</dbReference>
<dbReference type="GO" id="GO:0034333">
    <property type="term" value="P:adherens junction assembly"/>
    <property type="evidence" value="ECO:0007669"/>
    <property type="project" value="Ensembl"/>
</dbReference>
<dbReference type="GO" id="GO:0045176">
    <property type="term" value="P:apical protein localization"/>
    <property type="evidence" value="ECO:0007669"/>
    <property type="project" value="Ensembl"/>
</dbReference>
<dbReference type="GO" id="GO:0007409">
    <property type="term" value="P:axonogenesis"/>
    <property type="evidence" value="ECO:0000318"/>
    <property type="project" value="GO_Central"/>
</dbReference>
<dbReference type="GO" id="GO:0048870">
    <property type="term" value="P:cell motility"/>
    <property type="evidence" value="ECO:0000318"/>
    <property type="project" value="GO_Central"/>
</dbReference>
<dbReference type="GO" id="GO:0072749">
    <property type="term" value="P:cellular response to cytochalasin B"/>
    <property type="evidence" value="ECO:0007669"/>
    <property type="project" value="Ensembl"/>
</dbReference>
<dbReference type="GO" id="GO:0007163">
    <property type="term" value="P:establishment or maintenance of cell polarity"/>
    <property type="evidence" value="ECO:0007669"/>
    <property type="project" value="Ensembl"/>
</dbReference>
<dbReference type="GO" id="GO:0001738">
    <property type="term" value="P:morphogenesis of a polarized epithelium"/>
    <property type="evidence" value="ECO:0007669"/>
    <property type="project" value="Ensembl"/>
</dbReference>
<dbReference type="GO" id="GO:1905168">
    <property type="term" value="P:positive regulation of double-strand break repair via homologous recombination"/>
    <property type="evidence" value="ECO:0007669"/>
    <property type="project" value="Ensembl"/>
</dbReference>
<dbReference type="GO" id="GO:0071896">
    <property type="term" value="P:protein localization to adherens junction"/>
    <property type="evidence" value="ECO:0007669"/>
    <property type="project" value="Ensembl"/>
</dbReference>
<dbReference type="GO" id="GO:0051726">
    <property type="term" value="P:regulation of cell cycle"/>
    <property type="evidence" value="ECO:0007669"/>
    <property type="project" value="Ensembl"/>
</dbReference>
<dbReference type="GO" id="GO:0051621">
    <property type="term" value="P:regulation of norepinephrine uptake"/>
    <property type="evidence" value="ECO:0007669"/>
    <property type="project" value="Ensembl"/>
</dbReference>
<dbReference type="GO" id="GO:1903076">
    <property type="term" value="P:regulation of protein localization to plasma membrane"/>
    <property type="evidence" value="ECO:0007669"/>
    <property type="project" value="Ensembl"/>
</dbReference>
<dbReference type="GO" id="GO:1900242">
    <property type="term" value="P:regulation of synaptic vesicle endocytosis"/>
    <property type="evidence" value="ECO:0007669"/>
    <property type="project" value="Ensembl"/>
</dbReference>
<dbReference type="GO" id="GO:0150111">
    <property type="term" value="P:regulation of transepithelial transport"/>
    <property type="evidence" value="ECO:0007669"/>
    <property type="project" value="Ensembl"/>
</dbReference>
<dbReference type="CDD" id="cd10224">
    <property type="entry name" value="ASKHA_NBD_actin"/>
    <property type="match status" value="1"/>
</dbReference>
<dbReference type="FunFam" id="3.30.420.40:FF:000131">
    <property type="entry name" value="Actin, alpha skeletal muscle"/>
    <property type="match status" value="1"/>
</dbReference>
<dbReference type="FunFam" id="3.30.420.40:FF:000291">
    <property type="entry name" value="Actin, alpha skeletal muscle"/>
    <property type="match status" value="1"/>
</dbReference>
<dbReference type="FunFam" id="3.90.640.10:FF:000047">
    <property type="entry name" value="Actin, alpha skeletal muscle"/>
    <property type="match status" value="1"/>
</dbReference>
<dbReference type="FunFam" id="3.30.420.40:FF:000058">
    <property type="entry name" value="Putative actin-related protein 5"/>
    <property type="match status" value="1"/>
</dbReference>
<dbReference type="Gene3D" id="3.30.420.40">
    <property type="match status" value="2"/>
</dbReference>
<dbReference type="Gene3D" id="3.90.640.10">
    <property type="entry name" value="Actin, Chain A, domain 4"/>
    <property type="match status" value="1"/>
</dbReference>
<dbReference type="InterPro" id="IPR004000">
    <property type="entry name" value="Actin"/>
</dbReference>
<dbReference type="InterPro" id="IPR020902">
    <property type="entry name" value="Actin/actin-like_CS"/>
</dbReference>
<dbReference type="InterPro" id="IPR004001">
    <property type="entry name" value="Actin_CS"/>
</dbReference>
<dbReference type="InterPro" id="IPR043129">
    <property type="entry name" value="ATPase_NBD"/>
</dbReference>
<dbReference type="PANTHER" id="PTHR11937">
    <property type="entry name" value="ACTIN"/>
    <property type="match status" value="1"/>
</dbReference>
<dbReference type="Pfam" id="PF00022">
    <property type="entry name" value="Actin"/>
    <property type="match status" value="1"/>
</dbReference>
<dbReference type="PRINTS" id="PR00190">
    <property type="entry name" value="ACTIN"/>
</dbReference>
<dbReference type="SMART" id="SM00268">
    <property type="entry name" value="ACTIN"/>
    <property type="match status" value="1"/>
</dbReference>
<dbReference type="SUPFAM" id="SSF53067">
    <property type="entry name" value="Actin-like ATPase domain"/>
    <property type="match status" value="2"/>
</dbReference>
<dbReference type="PROSITE" id="PS00406">
    <property type="entry name" value="ACTINS_1"/>
    <property type="match status" value="1"/>
</dbReference>
<dbReference type="PROSITE" id="PS00432">
    <property type="entry name" value="ACTINS_2"/>
    <property type="match status" value="1"/>
</dbReference>
<dbReference type="PROSITE" id="PS01132">
    <property type="entry name" value="ACTINS_ACT_LIKE"/>
    <property type="match status" value="1"/>
</dbReference>
<protein>
    <recommendedName>
        <fullName>Actin, cytoplasmic 1</fullName>
        <ecNumber evidence="3">3.6.4.-</ecNumber>
    </recommendedName>
    <alternativeName>
        <fullName>Beta-actin</fullName>
    </alternativeName>
    <component>
        <recommendedName>
            <fullName>Actin, cytoplasmic 1, N-terminally processed</fullName>
        </recommendedName>
    </component>
</protein>
<accession>Q6QAQ1</accession>
<feature type="chain" id="PRO_0000291869" description="Actin, cytoplasmic 1">
    <location>
        <begin position="1"/>
        <end position="375"/>
    </location>
</feature>
<feature type="initiator methionine" description="Removed; alternate" evidence="1">
    <location>
        <position position="1"/>
    </location>
</feature>
<feature type="chain" id="PRO_0000367078" description="Actin, cytoplasmic 1, N-terminally processed">
    <location>
        <begin position="2"/>
        <end position="375"/>
    </location>
</feature>
<feature type="modified residue" description="N-acetylmethionine" evidence="1">
    <location>
        <position position="1"/>
    </location>
</feature>
<feature type="modified residue" description="N-acetylaspartate; in Actin, cytoplasmic 1, N-terminally processed" evidence="1">
    <location>
        <position position="2"/>
    </location>
</feature>
<feature type="modified residue" description="Methionine (R)-sulfoxide" evidence="2">
    <location>
        <position position="44"/>
    </location>
</feature>
<feature type="modified residue" description="Methionine (R)-sulfoxide" evidence="2">
    <location>
        <position position="47"/>
    </location>
</feature>
<feature type="modified residue" description="Tele-methylhistidine" evidence="2">
    <location>
        <position position="73"/>
    </location>
</feature>
<feature type="modified residue" description="N6-methyllysine" evidence="1">
    <location>
        <position position="84"/>
    </location>
</feature>
<feature type="strand" evidence="22">
    <location>
        <begin position="8"/>
        <end position="12"/>
    </location>
</feature>
<feature type="strand" evidence="22">
    <location>
        <begin position="14"/>
        <end position="21"/>
    </location>
</feature>
<feature type="strand" evidence="22">
    <location>
        <begin position="28"/>
        <end position="32"/>
    </location>
</feature>
<feature type="strand" evidence="22">
    <location>
        <begin position="35"/>
        <end position="39"/>
    </location>
</feature>
<feature type="helix" evidence="23">
    <location>
        <begin position="43"/>
        <end position="46"/>
    </location>
</feature>
<feature type="strand" evidence="22">
    <location>
        <begin position="51"/>
        <end position="54"/>
    </location>
</feature>
<feature type="helix" evidence="22">
    <location>
        <begin position="56"/>
        <end position="60"/>
    </location>
</feature>
<feature type="turn" evidence="22">
    <location>
        <begin position="61"/>
        <end position="64"/>
    </location>
</feature>
<feature type="strand" evidence="22">
    <location>
        <begin position="65"/>
        <end position="68"/>
    </location>
</feature>
<feature type="strand" evidence="22">
    <location>
        <begin position="70"/>
        <end position="72"/>
    </location>
</feature>
<feature type="strand" evidence="21">
    <location>
        <begin position="75"/>
        <end position="77"/>
    </location>
</feature>
<feature type="helix" evidence="22">
    <location>
        <begin position="79"/>
        <end position="91"/>
    </location>
</feature>
<feature type="turn" evidence="22">
    <location>
        <begin position="92"/>
        <end position="94"/>
    </location>
</feature>
<feature type="helix" evidence="22">
    <location>
        <begin position="98"/>
        <end position="100"/>
    </location>
</feature>
<feature type="strand" evidence="22">
    <location>
        <begin position="103"/>
        <end position="107"/>
    </location>
</feature>
<feature type="helix" evidence="22">
    <location>
        <begin position="113"/>
        <end position="125"/>
    </location>
</feature>
<feature type="strand" evidence="22">
    <location>
        <begin position="130"/>
        <end position="136"/>
    </location>
</feature>
<feature type="helix" evidence="22">
    <location>
        <begin position="137"/>
        <end position="144"/>
    </location>
</feature>
<feature type="strand" evidence="22">
    <location>
        <begin position="148"/>
        <end position="155"/>
    </location>
</feature>
<feature type="strand" evidence="22">
    <location>
        <begin position="160"/>
        <end position="166"/>
    </location>
</feature>
<feature type="helix" evidence="22">
    <location>
        <begin position="172"/>
        <end position="174"/>
    </location>
</feature>
<feature type="strand" evidence="22">
    <location>
        <begin position="176"/>
        <end position="179"/>
    </location>
</feature>
<feature type="helix" evidence="22">
    <location>
        <begin position="183"/>
        <end position="196"/>
    </location>
</feature>
<feature type="helix" evidence="22">
    <location>
        <begin position="203"/>
        <end position="216"/>
    </location>
</feature>
<feature type="helix" evidence="22">
    <location>
        <begin position="223"/>
        <end position="232"/>
    </location>
</feature>
<feature type="strand" evidence="22">
    <location>
        <begin position="238"/>
        <end position="241"/>
    </location>
</feature>
<feature type="strand" evidence="22">
    <location>
        <begin position="243"/>
        <end position="245"/>
    </location>
</feature>
<feature type="strand" evidence="22">
    <location>
        <begin position="247"/>
        <end position="250"/>
    </location>
</feature>
<feature type="helix" evidence="22">
    <location>
        <begin position="252"/>
        <end position="254"/>
    </location>
</feature>
<feature type="turn" evidence="22">
    <location>
        <begin position="255"/>
        <end position="258"/>
    </location>
</feature>
<feature type="helix" evidence="22">
    <location>
        <begin position="259"/>
        <end position="262"/>
    </location>
</feature>
<feature type="helix" evidence="22">
    <location>
        <begin position="264"/>
        <end position="267"/>
    </location>
</feature>
<feature type="helix" evidence="22">
    <location>
        <begin position="274"/>
        <end position="284"/>
    </location>
</feature>
<feature type="helix" evidence="22">
    <location>
        <begin position="287"/>
        <end position="295"/>
    </location>
</feature>
<feature type="strand" evidence="22">
    <location>
        <begin position="297"/>
        <end position="301"/>
    </location>
</feature>
<feature type="helix" evidence="22">
    <location>
        <begin position="302"/>
        <end position="305"/>
    </location>
</feature>
<feature type="helix" evidence="22">
    <location>
        <begin position="309"/>
        <end position="320"/>
    </location>
</feature>
<feature type="strand" evidence="22">
    <location>
        <begin position="323"/>
        <end position="325"/>
    </location>
</feature>
<feature type="helix" evidence="22">
    <location>
        <begin position="335"/>
        <end position="337"/>
    </location>
</feature>
<feature type="helix" evidence="22">
    <location>
        <begin position="338"/>
        <end position="348"/>
    </location>
</feature>
<feature type="helix" evidence="22">
    <location>
        <begin position="351"/>
        <end position="354"/>
    </location>
</feature>
<feature type="strand" evidence="22">
    <location>
        <begin position="356"/>
        <end position="358"/>
    </location>
</feature>
<feature type="helix" evidence="22">
    <location>
        <begin position="359"/>
        <end position="365"/>
    </location>
</feature>
<feature type="helix" evidence="22">
    <location>
        <begin position="367"/>
        <end position="369"/>
    </location>
</feature>
<feature type="helix" evidence="22">
    <location>
        <begin position="370"/>
        <end position="373"/>
    </location>
</feature>
<gene>
    <name type="primary">ACTB</name>
</gene>
<name>ACTB_PIG</name>
<sequence length="375" mass="41737">MDDDIAALVVDNGSGMCKAGFAGDDAPRAVFPSIVGRPRHQGVMVGMGQKDSYVGDEAQSKRGILTLKYPIEHGIVTNWDDMEKIWHHTFYNELRVAPEEHPVLLTEAPLNPKANREKMTQIMFETFNTPAMYVAIQAVLSLYASGRTTGIVMDSGDGVTHTVPIYEGYALPHAILRLDLAGRDLTDYLMKILTERGYSFTTTAEREIVRDIKEKLCYVALDFEQEMATAASSSSLEKSYELPDGQVITIGNERFRCPEALFQPSFLGMESCGIHETTFNSIMKCDVDIRKDLYANTVLSGGTTMYPGIADRMQKEITALAPSTMKIKIIAPPERKYSVWIGGSILASLSTFQQMWISKQEYDESGPSIVHRKCF</sequence>
<reference key="1">
    <citation type="submission" date="2004-02" db="EMBL/GenBank/DDBJ databases">
        <title>Identification of differentially expressed genes in porcine embryos.</title>
        <authorList>
            <person name="Lee H.Y."/>
            <person name="Cui X.S."/>
            <person name="Jeong Y.J."/>
            <person name="Shin M.L."/>
            <person name="Hwang K.C."/>
            <person name="Kim N.H."/>
        </authorList>
    </citation>
    <scope>NUCLEOTIDE SEQUENCE [MRNA]</scope>
</reference>
<reference evidence="9 10" key="2">
    <citation type="journal article" date="2015" name="Science">
        <title>The structure of the dynactin complex and its interaction with dynein.</title>
        <authorList>
            <person name="Urnavicius L."/>
            <person name="Zhang K."/>
            <person name="Diamant A.G."/>
            <person name="Motz C."/>
            <person name="Schlager M.A."/>
            <person name="Yu M."/>
            <person name="Patel N.A."/>
            <person name="Robinson C.V."/>
            <person name="Carter A.P."/>
        </authorList>
    </citation>
    <scope>STRUCTURE BY ELECTRON MICROSCOPY (3.50 ANGSTROMS) OF 6-375</scope>
</reference>
<reference evidence="11 12 13" key="3">
    <citation type="journal article" date="2018" name="Nature">
        <title>Cryo-EM shows how dynactin recruits two dyneins for faster movement.</title>
        <authorList>
            <person name="Urnavicius L."/>
            <person name="Lau C.K."/>
            <person name="Elshenawy M.M."/>
            <person name="Morales-Rios E."/>
            <person name="Motz C."/>
            <person name="Yildiz A."/>
            <person name="Carter A.P."/>
        </authorList>
    </citation>
    <scope>STRUCTURE BY ELECTRON MICROSCOPY (3.50 ANGSTROMS)</scope>
</reference>
<reference evidence="14 15 16 17 18" key="4">
    <citation type="journal article" date="2021" name="EMBO J.">
        <title>Cryo-EM reveals the complex architecture of dynactin's shoulder region and pointed end.</title>
        <authorList>
            <person name="Lau C.K."/>
            <person name="O'Reilly F.J."/>
            <person name="Santhanam B."/>
            <person name="Lacey S.E."/>
            <person name="Rappsilber J."/>
            <person name="Carter A.P."/>
        </authorList>
    </citation>
    <scope>STRUCTURE BY ELECTRON MICROSCOPY (3.80 ANGSTROMS)</scope>
</reference>
<reference evidence="19 20" key="5">
    <citation type="journal article" date="2022" name="Nature">
        <title>Structure of dynein-dynactin on microtubules shows tandem adaptor binding.</title>
        <authorList>
            <person name="Chaaban S."/>
            <person name="Carter A.P."/>
        </authorList>
    </citation>
    <scope>STRUCTURE BY ELECTRON MICROSCOPY (3.37 ANGSTROMS)</scope>
</reference>
<organism>
    <name type="scientific">Sus scrofa</name>
    <name type="common">Pig</name>
    <dbReference type="NCBI Taxonomy" id="9823"/>
    <lineage>
        <taxon>Eukaryota</taxon>
        <taxon>Metazoa</taxon>
        <taxon>Chordata</taxon>
        <taxon>Craniata</taxon>
        <taxon>Vertebrata</taxon>
        <taxon>Euteleostomi</taxon>
        <taxon>Mammalia</taxon>
        <taxon>Eutheria</taxon>
        <taxon>Laurasiatheria</taxon>
        <taxon>Artiodactyla</taxon>
        <taxon>Suina</taxon>
        <taxon>Suidae</taxon>
        <taxon>Sus</taxon>
    </lineage>
</organism>
<evidence type="ECO:0000250" key="1">
    <source>
        <dbReference type="UniProtKB" id="P60709"/>
    </source>
</evidence>
<evidence type="ECO:0000250" key="2">
    <source>
        <dbReference type="UniProtKB" id="P60710"/>
    </source>
</evidence>
<evidence type="ECO:0000250" key="3">
    <source>
        <dbReference type="UniProtKB" id="P68137"/>
    </source>
</evidence>
<evidence type="ECO:0000269" key="4">
    <source>
    </source>
</evidence>
<evidence type="ECO:0000269" key="5">
    <source>
    </source>
</evidence>
<evidence type="ECO:0000269" key="6">
    <source>
    </source>
</evidence>
<evidence type="ECO:0000269" key="7">
    <source>
    </source>
</evidence>
<evidence type="ECO:0000305" key="8"/>
<evidence type="ECO:0007744" key="9">
    <source>
        <dbReference type="PDB" id="5ADX"/>
    </source>
</evidence>
<evidence type="ECO:0007744" key="10">
    <source>
        <dbReference type="PDB" id="5AFU"/>
    </source>
</evidence>
<evidence type="ECO:0007744" key="11">
    <source>
        <dbReference type="PDB" id="6F1T"/>
    </source>
</evidence>
<evidence type="ECO:0007744" key="12">
    <source>
        <dbReference type="PDB" id="6F38"/>
    </source>
</evidence>
<evidence type="ECO:0007744" key="13">
    <source>
        <dbReference type="PDB" id="6F3A"/>
    </source>
</evidence>
<evidence type="ECO:0007744" key="14">
    <source>
        <dbReference type="PDB" id="6ZNL"/>
    </source>
</evidence>
<evidence type="ECO:0007744" key="15">
    <source>
        <dbReference type="PDB" id="6ZNM"/>
    </source>
</evidence>
<evidence type="ECO:0007744" key="16">
    <source>
        <dbReference type="PDB" id="6ZNN"/>
    </source>
</evidence>
<evidence type="ECO:0007744" key="17">
    <source>
        <dbReference type="PDB" id="6ZNO"/>
    </source>
</evidence>
<evidence type="ECO:0007744" key="18">
    <source>
        <dbReference type="PDB" id="6ZO4"/>
    </source>
</evidence>
<evidence type="ECO:0007744" key="19">
    <source>
        <dbReference type="PDB" id="7Z8F"/>
    </source>
</evidence>
<evidence type="ECO:0007744" key="20">
    <source>
        <dbReference type="PDB" id="7Z8M"/>
    </source>
</evidence>
<evidence type="ECO:0007829" key="21">
    <source>
        <dbReference type="PDB" id="6F1T"/>
    </source>
</evidence>
<evidence type="ECO:0007829" key="22">
    <source>
        <dbReference type="PDB" id="7Z8M"/>
    </source>
</evidence>
<evidence type="ECO:0007829" key="23">
    <source>
        <dbReference type="PDB" id="8IAI"/>
    </source>
</evidence>
<proteinExistence type="evidence at protein level"/>
<keyword id="KW-0002">3D-structure</keyword>
<keyword id="KW-0007">Acetylation</keyword>
<keyword id="KW-0067">ATP-binding</keyword>
<keyword id="KW-0963">Cytoplasm</keyword>
<keyword id="KW-0206">Cytoskeleton</keyword>
<keyword id="KW-0378">Hydrolase</keyword>
<keyword id="KW-0488">Methylation</keyword>
<keyword id="KW-0547">Nucleotide-binding</keyword>
<keyword id="KW-0539">Nucleus</keyword>
<keyword id="KW-0558">Oxidation</keyword>
<keyword id="KW-1185">Reference proteome</keyword>
<keyword id="KW-0832">Ubl conjugation</keyword>
<comment type="function">
    <text evidence="1 4 5 6 7">Actin is a highly conserved protein that polymerizes to produce filaments that form cross-linked networks in the cytoplasm of cells (By similarity). Actin exists in both monomeric (G-actin) and polymeric (F-actin) forms, both forms playing key functions, such as cell motility and contraction (By similarity). In addition to their role in the cytoplasmic cytoskeleton, G- and F-actin also localize in the nucleus, and regulate gene transcription and motility and repair of damaged DNA (By similarity). Plays a role in the assembly of the gamma-tubulin ring complex (gTuRC), which regulates the minus-end nucleation of alpha-beta tubulin heterodimers that grow into microtubule protafilaments (By similarity). Part of the ACTR1A/ACTB filament around which the dynactin complex is built (PubMed:25814576, PubMed:29420470, PubMed:33734450, PubMed:36071160). The dynactin multiprotein complex activates the molecular motor dynein for ultra-processive transport along microtubules (PubMed:25814576, PubMed:29420470, PubMed:33734450, PubMed:36071160).</text>
</comment>
<comment type="catalytic activity">
    <reaction evidence="3">
        <text>ATP + H2O = ADP + phosphate + H(+)</text>
        <dbReference type="Rhea" id="RHEA:13065"/>
        <dbReference type="ChEBI" id="CHEBI:15377"/>
        <dbReference type="ChEBI" id="CHEBI:15378"/>
        <dbReference type="ChEBI" id="CHEBI:30616"/>
        <dbReference type="ChEBI" id="CHEBI:43474"/>
        <dbReference type="ChEBI" id="CHEBI:456216"/>
    </reaction>
</comment>
<comment type="subunit">
    <text evidence="1 2 4 5 6 7">Polymerization of globular actin (G-actin) leads to a structural filament (F-actin) in the form of a two-stranded helix (By similarity). Each actin can bind to 4 others (By similarity). Identified in a IGF2BP1-dependent mRNP granule complex containing untranslated mRNAs (By similarity). Component of the BAF complex, which includes at least actin (ACTB), ARID1A, ARID1B/BAF250, SMARCA2, SMARCA4/BRG1, ACTL6A/BAF53, ACTL6B/BAF53B, SMARCE1/BAF57 SMARCC1/BAF155, SMARCC2/BAF170, SMARCB1/SNF5/INI1, and one or more of SMARCD1/BAF60A, SMARCD2/BAF60B, or SMARCD3/BAF60C (By similarity). In muscle cells, the BAF complex also contains DPF3 (By similarity). Found in a complex with XPO6, Ran, ACTB and PFN1 (By similarity). Interacts with PFN1 (By similarity). Interacts with XPO6 and EMD (By similarity). Interacts with ERBB2 (By similarity). Interacts with GCSAM (By similarity). Interacts with TBC1D21 (By similarity). Interacts with CPNE1 (via VWFA domain) and CPNE4 (via VWFA domain) (By similarity). Interacts with DHX9 (via C-terminus); this interaction is direct and mediates the attachment to nuclear ribonucleoprotein complexes (By similarity). Interacts with FAM107A (By similarity). Associates with the gamma-tubulin ring complex (gTuRC) consisting of TUBGCP2, TUBGCP3, TUBGCP4, TUBGCP5 and TUBGCP6 and gamma-tubulin TUBG1 or TUBG2; within the complex, interacts with TUBGCP3 and TUBGCP6 to form a luminal bridge with MZT1 that stabilizes the initial structure during complex assembly (By similarity). Part of the ACTR1A/ACTB filament around which the dynactin complex is built (PubMed:25814576, PubMed:29420470, PubMed:33734450, PubMed:36071160). The filament contains 8 copies of ACTR1A and 1 ACTB (PubMed:25814576). Interacts with TPRN which forms ring-like structures in the stereocilium taper region; the interaction may stabilize stereocilia in inner ear hair cells (By similarity). Interacts with AMOTL2 (via N-terminus), the interaction facilitates binding of cell junction complexes to actin fibers in endothelial cells (By similarity).</text>
</comment>
<comment type="interaction">
    <interactant intactId="EBI-12513903">
        <id>Q6QAQ1</id>
    </interactant>
    <interactant intactId="EBI-12685051">
        <id>Q05G10</id>
        <label>g1</label>
    </interactant>
    <organismsDiffer>true</organismsDiffer>
    <experiments>4</experiments>
</comment>
<comment type="interaction">
    <interactant intactId="EBI-12513903">
        <id>Q6QAQ1</id>
    </interactant>
    <interactant intactId="EBI-12557210">
        <id>Q5U8X5</id>
    </interactant>
    <organismsDiffer>true</organismsDiffer>
    <experiments>6</experiments>
</comment>
<comment type="subcellular location">
    <subcellularLocation>
        <location evidence="1">Cytoplasm</location>
        <location evidence="1">Cytoskeleton</location>
    </subcellularLocation>
    <subcellularLocation>
        <location evidence="1">Nucleus</location>
    </subcellularLocation>
    <text evidence="1">Localized in cytoplasmic mRNP granules containing untranslated mRNAs.</text>
</comment>
<comment type="PTM">
    <molecule>Actin, cytoplasmic 1</molecule>
    <text evidence="1">N-terminal cleavage of acetylated methionine of immature cytoplasmic actin by ACTMAP.</text>
</comment>
<comment type="PTM">
    <text evidence="1">ISGylated.</text>
</comment>
<comment type="PTM">
    <text evidence="2">Oxidation of Met-44 and Met-47 by MICALs (MICAL1, MICAL2 or MICAL3) to form methionine sulfoxide promotes actin filament depolymerization. MICAL1 and MICAL2 produce the (R)-S-oxide form. The (R)-S-oxide form is reverted by MSRB1 and MSRB2, which promote actin repolymerization.</text>
</comment>
<comment type="PTM">
    <text evidence="1">Monomethylation at Lys-84 (K84me1) regulates actin-myosin interaction and actomyosin-dependent processes. Demethylation by ALKBH4 is required for maintaining actomyosin dynamics supporting normal cleavage furrow ingression during cytokinesis and cell migration.</text>
</comment>
<comment type="PTM">
    <molecule>Actin, cytoplasmic 1, N-terminally processed</molecule>
    <text evidence="1">N-terminal acetylation by NAA80 affects actin filament depolymerization and elongation, including elongation driven by formins. In contrast, filament nucleation by the Arp2/3 complex is not affected.</text>
</comment>
<comment type="PTM">
    <text evidence="1 2">Methylated at His-73 by SETD3 (By similarity). Methylation at His-73 is required for smooth muscle contraction of the laboring uterus during delivery (By similarity).</text>
</comment>
<comment type="miscellaneous">
    <text evidence="1">In vertebrates 3 main groups of actin isoforms, alpha, beta and gamma have been identified. The alpha actins are found in muscle tissues and are a major constituent of the contractile apparatus. The beta and gamma actins coexist in most cell types as components of the cytoskeleton and as mediators of internal cell motility.</text>
</comment>
<comment type="similarity">
    <text evidence="8">Belongs to the actin family.</text>
</comment>
<comment type="sequence caution" evidence="8">
    <conflict type="erroneous initiation">
        <sequence resource="EMBL-CDS" id="AAS55927"/>
    </conflict>
    <text>Extended N-terminus.</text>
</comment>